<feature type="chain" id="PRO_0000150720" description="Olfactory receptor 10X1">
    <location>
        <begin position="1"/>
        <end position="326"/>
    </location>
</feature>
<feature type="topological domain" description="Extracellular" evidence="1">
    <location>
        <begin position="1"/>
        <end position="41"/>
    </location>
</feature>
<feature type="transmembrane region" description="Helical; Name=1" evidence="1">
    <location>
        <begin position="42"/>
        <end position="62"/>
    </location>
</feature>
<feature type="topological domain" description="Cytoplasmic" evidence="1">
    <location>
        <begin position="63"/>
        <end position="70"/>
    </location>
</feature>
<feature type="transmembrane region" description="Helical; Name=2" evidence="1">
    <location>
        <begin position="71"/>
        <end position="91"/>
    </location>
</feature>
<feature type="topological domain" description="Extracellular" evidence="1">
    <location>
        <begin position="92"/>
        <end position="115"/>
    </location>
</feature>
<feature type="transmembrane region" description="Helical; Name=3" evidence="1">
    <location>
        <begin position="116"/>
        <end position="136"/>
    </location>
</feature>
<feature type="topological domain" description="Cytoplasmic" evidence="1">
    <location>
        <begin position="137"/>
        <end position="155"/>
    </location>
</feature>
<feature type="transmembrane region" description="Helical; Name=4" evidence="1">
    <location>
        <begin position="156"/>
        <end position="176"/>
    </location>
</feature>
<feature type="topological domain" description="Extracellular" evidence="1">
    <location>
        <begin position="177"/>
        <end position="213"/>
    </location>
</feature>
<feature type="transmembrane region" description="Helical; Name=5" evidence="1">
    <location>
        <begin position="214"/>
        <end position="233"/>
    </location>
</feature>
<feature type="topological domain" description="Cytoplasmic" evidence="1">
    <location>
        <begin position="234"/>
        <end position="253"/>
    </location>
</feature>
<feature type="transmembrane region" description="Helical; Name=6" evidence="1">
    <location>
        <begin position="254"/>
        <end position="274"/>
    </location>
</feature>
<feature type="topological domain" description="Extracellular" evidence="1">
    <location>
        <begin position="275"/>
        <end position="284"/>
    </location>
</feature>
<feature type="transmembrane region" description="Helical; Name=7" evidence="1">
    <location>
        <begin position="285"/>
        <end position="305"/>
    </location>
</feature>
<feature type="topological domain" description="Cytoplasmic" evidence="1">
    <location>
        <begin position="306"/>
        <end position="326"/>
    </location>
</feature>
<feature type="glycosylation site" description="N-linked (GlcNAc...) asparagine" evidence="1">
    <location>
        <position position="21"/>
    </location>
</feature>
<feature type="glycosylation site" description="N-linked (GlcNAc...) asparagine" evidence="1">
    <location>
        <position position="209"/>
    </location>
</feature>
<feature type="disulfide bond" evidence="2">
    <location>
        <begin position="113"/>
        <end position="205"/>
    </location>
</feature>
<feature type="sequence variant" id="VAR_053290" description="In dbSNP:rs863363.">
    <original>I</original>
    <variation>T</variation>
    <location>
        <position position="60"/>
    </location>
</feature>
<feature type="sequence variant" id="VAR_053291" description="In dbSNP:rs950164.">
    <original>A</original>
    <variation>S</variation>
    <location>
        <position position="81"/>
    </location>
</feature>
<feature type="sequence variant" id="VAR_053292" description="In dbSNP:rs7550131.">
    <original>S</original>
    <variation>P</variation>
    <location>
        <position position="172"/>
    </location>
</feature>
<feature type="sequence variant" id="VAR_053293" description="In dbSNP:rs16840360.">
    <original>F</original>
    <variation>L</variation>
    <location>
        <position position="180"/>
    </location>
</feature>
<sequence>MVLNVYCCFFQISDIQTMKINQTILKEFILVGFSVYPHVQTFLFVVFFCLYLLTLAGNLIIMGLTWVDRSLHTPMYLFLSALSFSETCYTLTIVPKMLEDLLAKDRSISVTGCSLQMCFFLGLGGTNCIILTLMGYDRFLAICNPLRYPLLMTNIVCGQLVASACTAGFFISLTETALIFRDSFCRPNLVKHFFCHMLAVIRLSCIDSNHTEFIITLISVSGLLGTLLLIILTDVFIISTVLRIPSAEGKQKAFTTCASHLTVVIIHFGFASIVYLKPEASGDDTLIAVPYTVITPFLSPIIFSLRNKDMKNAFRRMMGNTVALKK</sequence>
<dbReference type="EMBL" id="AB065636">
    <property type="protein sequence ID" value="BAC05862.1"/>
    <property type="status" value="ALT_INIT"/>
    <property type="molecule type" value="Genomic_DNA"/>
</dbReference>
<dbReference type="EMBL" id="AL160283">
    <property type="status" value="NOT_ANNOTATED_CDS"/>
    <property type="molecule type" value="Genomic_DNA"/>
</dbReference>
<dbReference type="EMBL" id="BK004194">
    <property type="protein sequence ID" value="DAA04592.1"/>
    <property type="molecule type" value="Genomic_DNA"/>
</dbReference>
<dbReference type="RefSeq" id="NP_001004477.1">
    <property type="nucleotide sequence ID" value="NM_001004477.1"/>
</dbReference>
<dbReference type="SMR" id="Q8NGY0"/>
<dbReference type="FunCoup" id="Q8NGY0">
    <property type="interactions" value="453"/>
</dbReference>
<dbReference type="STRING" id="9606.ENSP00000485609"/>
<dbReference type="GlyCosmos" id="Q8NGY0">
    <property type="glycosylation" value="2 sites, No reported glycans"/>
</dbReference>
<dbReference type="GlyGen" id="Q8NGY0">
    <property type="glycosylation" value="2 sites"/>
</dbReference>
<dbReference type="iPTMnet" id="Q8NGY0"/>
<dbReference type="PhosphoSitePlus" id="Q8NGY0"/>
<dbReference type="BioMuta" id="OR10X1"/>
<dbReference type="DMDM" id="166214962"/>
<dbReference type="MassIVE" id="Q8NGY0"/>
<dbReference type="PaxDb" id="9606-ENSP00000357132"/>
<dbReference type="ProteomicsDB" id="73621"/>
<dbReference type="Antibodypedia" id="78715">
    <property type="antibodies" value="112 antibodies from 22 providers"/>
</dbReference>
<dbReference type="DNASU" id="128367"/>
<dbReference type="Ensembl" id="ENST00000623167.1">
    <property type="protein sequence ID" value="ENSP00000485609.1"/>
    <property type="gene ID" value="ENSG00000279111.2"/>
</dbReference>
<dbReference type="GeneID" id="128367"/>
<dbReference type="KEGG" id="hsa:128367"/>
<dbReference type="MANE-Select" id="ENST00000623167.1">
    <property type="protein sequence ID" value="ENSP00000485609.1"/>
    <property type="RefSeq nucleotide sequence ID" value="NM_001004477.1"/>
    <property type="RefSeq protein sequence ID" value="NP_001004477.1"/>
</dbReference>
<dbReference type="UCSC" id="uc010pin.2">
    <property type="organism name" value="human"/>
</dbReference>
<dbReference type="AGR" id="HGNC:14995"/>
<dbReference type="CTD" id="128367"/>
<dbReference type="GeneCards" id="OR10X1"/>
<dbReference type="HGNC" id="HGNC:14995">
    <property type="gene designation" value="OR10X1"/>
</dbReference>
<dbReference type="HPA" id="ENSG00000279111">
    <property type="expression patterns" value="Not detected"/>
</dbReference>
<dbReference type="neXtProt" id="NX_Q8NGY0"/>
<dbReference type="PharmGKB" id="PA32007"/>
<dbReference type="VEuPathDB" id="HostDB:ENSG00000279111"/>
<dbReference type="eggNOG" id="ENOG502SHK4">
    <property type="taxonomic scope" value="Eukaryota"/>
</dbReference>
<dbReference type="GeneTree" id="ENSGT00940000161831"/>
<dbReference type="HOGENOM" id="CLU_012526_1_0_1"/>
<dbReference type="InParanoid" id="Q8NGY0"/>
<dbReference type="OMA" id="EFIVTMI"/>
<dbReference type="OrthoDB" id="9975554at2759"/>
<dbReference type="PAN-GO" id="Q8NGY0">
    <property type="GO annotations" value="0 GO annotations based on evolutionary models"/>
</dbReference>
<dbReference type="PhylomeDB" id="Q8NGY0"/>
<dbReference type="TreeFam" id="TF337925"/>
<dbReference type="PathwayCommons" id="Q8NGY0"/>
<dbReference type="Reactome" id="R-HSA-381753">
    <property type="pathway name" value="Olfactory Signaling Pathway"/>
</dbReference>
<dbReference type="Reactome" id="R-HSA-9752946">
    <property type="pathway name" value="Expression and translocation of olfactory receptors"/>
</dbReference>
<dbReference type="BioGRID-ORCS" id="128367">
    <property type="hits" value="11 hits in 735 CRISPR screens"/>
</dbReference>
<dbReference type="GeneWiki" id="OR10X1"/>
<dbReference type="GenomeRNAi" id="128367"/>
<dbReference type="Pharos" id="Q8NGY0">
    <property type="development level" value="Tdark"/>
</dbReference>
<dbReference type="PRO" id="PR:Q8NGY0"/>
<dbReference type="Proteomes" id="UP000005640">
    <property type="component" value="Chromosome 1"/>
</dbReference>
<dbReference type="RNAct" id="Q8NGY0">
    <property type="molecule type" value="protein"/>
</dbReference>
<dbReference type="ExpressionAtlas" id="Q8NGY0">
    <property type="expression patterns" value="baseline and differential"/>
</dbReference>
<dbReference type="GO" id="GO:0005886">
    <property type="term" value="C:plasma membrane"/>
    <property type="evidence" value="ECO:0000304"/>
    <property type="project" value="Reactome"/>
</dbReference>
<dbReference type="GO" id="GO:0004930">
    <property type="term" value="F:G protein-coupled receptor activity"/>
    <property type="evidence" value="ECO:0007669"/>
    <property type="project" value="UniProtKB-KW"/>
</dbReference>
<dbReference type="GO" id="GO:0004984">
    <property type="term" value="F:olfactory receptor activity"/>
    <property type="evidence" value="ECO:0007669"/>
    <property type="project" value="InterPro"/>
</dbReference>
<dbReference type="CDD" id="cd15225">
    <property type="entry name" value="7tmA_OR10A-like"/>
    <property type="match status" value="1"/>
</dbReference>
<dbReference type="FunFam" id="1.20.1070.10:FF:000001">
    <property type="entry name" value="Olfactory receptor"/>
    <property type="match status" value="1"/>
</dbReference>
<dbReference type="Gene3D" id="1.20.1070.10">
    <property type="entry name" value="Rhodopsin 7-helix transmembrane proteins"/>
    <property type="match status" value="1"/>
</dbReference>
<dbReference type="InterPro" id="IPR000276">
    <property type="entry name" value="GPCR_Rhodpsn"/>
</dbReference>
<dbReference type="InterPro" id="IPR017452">
    <property type="entry name" value="GPCR_Rhodpsn_7TM"/>
</dbReference>
<dbReference type="InterPro" id="IPR000725">
    <property type="entry name" value="Olfact_rcpt"/>
</dbReference>
<dbReference type="PANTHER" id="PTHR26453">
    <property type="entry name" value="OLFACTORY RECEPTOR"/>
    <property type="match status" value="1"/>
</dbReference>
<dbReference type="Pfam" id="PF13853">
    <property type="entry name" value="7tm_4"/>
    <property type="match status" value="1"/>
</dbReference>
<dbReference type="PRINTS" id="PR00237">
    <property type="entry name" value="GPCRRHODOPSN"/>
</dbReference>
<dbReference type="PRINTS" id="PR00245">
    <property type="entry name" value="OLFACTORYR"/>
</dbReference>
<dbReference type="SUPFAM" id="SSF81321">
    <property type="entry name" value="Family A G protein-coupled receptor-like"/>
    <property type="match status" value="1"/>
</dbReference>
<dbReference type="PROSITE" id="PS00237">
    <property type="entry name" value="G_PROTEIN_RECEP_F1_1"/>
    <property type="match status" value="1"/>
</dbReference>
<dbReference type="PROSITE" id="PS50262">
    <property type="entry name" value="G_PROTEIN_RECEP_F1_2"/>
    <property type="match status" value="1"/>
</dbReference>
<organism>
    <name type="scientific">Homo sapiens</name>
    <name type="common">Human</name>
    <dbReference type="NCBI Taxonomy" id="9606"/>
    <lineage>
        <taxon>Eukaryota</taxon>
        <taxon>Metazoa</taxon>
        <taxon>Chordata</taxon>
        <taxon>Craniata</taxon>
        <taxon>Vertebrata</taxon>
        <taxon>Euteleostomi</taxon>
        <taxon>Mammalia</taxon>
        <taxon>Eutheria</taxon>
        <taxon>Euarchontoglires</taxon>
        <taxon>Primates</taxon>
        <taxon>Haplorrhini</taxon>
        <taxon>Catarrhini</taxon>
        <taxon>Hominidae</taxon>
        <taxon>Homo</taxon>
    </lineage>
</organism>
<gene>
    <name type="primary">OR10X1</name>
    <name type="synonym">OR10X1P</name>
</gene>
<keyword id="KW-1003">Cell membrane</keyword>
<keyword id="KW-1015">Disulfide bond</keyword>
<keyword id="KW-0297">G-protein coupled receptor</keyword>
<keyword id="KW-0325">Glycoprotein</keyword>
<keyword id="KW-0472">Membrane</keyword>
<keyword id="KW-0552">Olfaction</keyword>
<keyword id="KW-0675">Receptor</keyword>
<keyword id="KW-1185">Reference proteome</keyword>
<keyword id="KW-0716">Sensory transduction</keyword>
<keyword id="KW-0807">Transducer</keyword>
<keyword id="KW-0812">Transmembrane</keyword>
<keyword id="KW-1133">Transmembrane helix</keyword>
<evidence type="ECO:0000255" key="1"/>
<evidence type="ECO:0000255" key="2">
    <source>
        <dbReference type="PROSITE-ProRule" id="PRU00521"/>
    </source>
</evidence>
<evidence type="ECO:0000305" key="3"/>
<name>O10X1_HUMAN</name>
<reference key="1">
    <citation type="submission" date="2001-07" db="EMBL/GenBank/DDBJ databases">
        <title>Genome-wide discovery and analysis of human seven transmembrane helix receptor genes.</title>
        <authorList>
            <person name="Suwa M."/>
            <person name="Sato T."/>
            <person name="Okouchi I."/>
            <person name="Arita M."/>
            <person name="Futami K."/>
            <person name="Matsumoto S."/>
            <person name="Tsutsumi S."/>
            <person name="Aburatani H."/>
            <person name="Asai K."/>
            <person name="Akiyama Y."/>
        </authorList>
    </citation>
    <scope>NUCLEOTIDE SEQUENCE [GENOMIC DNA]</scope>
</reference>
<reference key="2">
    <citation type="journal article" date="2006" name="Nature">
        <title>The DNA sequence and biological annotation of human chromosome 1.</title>
        <authorList>
            <person name="Gregory S.G."/>
            <person name="Barlow K.F."/>
            <person name="McLay K.E."/>
            <person name="Kaul R."/>
            <person name="Swarbreck D."/>
            <person name="Dunham A."/>
            <person name="Scott C.E."/>
            <person name="Howe K.L."/>
            <person name="Woodfine K."/>
            <person name="Spencer C.C.A."/>
            <person name="Jones M.C."/>
            <person name="Gillson C."/>
            <person name="Searle S."/>
            <person name="Zhou Y."/>
            <person name="Kokocinski F."/>
            <person name="McDonald L."/>
            <person name="Evans R."/>
            <person name="Phillips K."/>
            <person name="Atkinson A."/>
            <person name="Cooper R."/>
            <person name="Jones C."/>
            <person name="Hall R.E."/>
            <person name="Andrews T.D."/>
            <person name="Lloyd C."/>
            <person name="Ainscough R."/>
            <person name="Almeida J.P."/>
            <person name="Ambrose K.D."/>
            <person name="Anderson F."/>
            <person name="Andrew R.W."/>
            <person name="Ashwell R.I.S."/>
            <person name="Aubin K."/>
            <person name="Babbage A.K."/>
            <person name="Bagguley C.L."/>
            <person name="Bailey J."/>
            <person name="Beasley H."/>
            <person name="Bethel G."/>
            <person name="Bird C.P."/>
            <person name="Bray-Allen S."/>
            <person name="Brown J.Y."/>
            <person name="Brown A.J."/>
            <person name="Buckley D."/>
            <person name="Burton J."/>
            <person name="Bye J."/>
            <person name="Carder C."/>
            <person name="Chapman J.C."/>
            <person name="Clark S.Y."/>
            <person name="Clarke G."/>
            <person name="Clee C."/>
            <person name="Cobley V."/>
            <person name="Collier R.E."/>
            <person name="Corby N."/>
            <person name="Coville G.J."/>
            <person name="Davies J."/>
            <person name="Deadman R."/>
            <person name="Dunn M."/>
            <person name="Earthrowl M."/>
            <person name="Ellington A.G."/>
            <person name="Errington H."/>
            <person name="Frankish A."/>
            <person name="Frankland J."/>
            <person name="French L."/>
            <person name="Garner P."/>
            <person name="Garnett J."/>
            <person name="Gay L."/>
            <person name="Ghori M.R.J."/>
            <person name="Gibson R."/>
            <person name="Gilby L.M."/>
            <person name="Gillett W."/>
            <person name="Glithero R.J."/>
            <person name="Grafham D.V."/>
            <person name="Griffiths C."/>
            <person name="Griffiths-Jones S."/>
            <person name="Grocock R."/>
            <person name="Hammond S."/>
            <person name="Harrison E.S.I."/>
            <person name="Hart E."/>
            <person name="Haugen E."/>
            <person name="Heath P.D."/>
            <person name="Holmes S."/>
            <person name="Holt K."/>
            <person name="Howden P.J."/>
            <person name="Hunt A.R."/>
            <person name="Hunt S.E."/>
            <person name="Hunter G."/>
            <person name="Isherwood J."/>
            <person name="James R."/>
            <person name="Johnson C."/>
            <person name="Johnson D."/>
            <person name="Joy A."/>
            <person name="Kay M."/>
            <person name="Kershaw J.K."/>
            <person name="Kibukawa M."/>
            <person name="Kimberley A.M."/>
            <person name="King A."/>
            <person name="Knights A.J."/>
            <person name="Lad H."/>
            <person name="Laird G."/>
            <person name="Lawlor S."/>
            <person name="Leongamornlert D.A."/>
            <person name="Lloyd D.M."/>
            <person name="Loveland J."/>
            <person name="Lovell J."/>
            <person name="Lush M.J."/>
            <person name="Lyne R."/>
            <person name="Martin S."/>
            <person name="Mashreghi-Mohammadi M."/>
            <person name="Matthews L."/>
            <person name="Matthews N.S.W."/>
            <person name="McLaren S."/>
            <person name="Milne S."/>
            <person name="Mistry S."/>
            <person name="Moore M.J.F."/>
            <person name="Nickerson T."/>
            <person name="O'Dell C.N."/>
            <person name="Oliver K."/>
            <person name="Palmeiri A."/>
            <person name="Palmer S.A."/>
            <person name="Parker A."/>
            <person name="Patel D."/>
            <person name="Pearce A.V."/>
            <person name="Peck A.I."/>
            <person name="Pelan S."/>
            <person name="Phelps K."/>
            <person name="Phillimore B.J."/>
            <person name="Plumb R."/>
            <person name="Rajan J."/>
            <person name="Raymond C."/>
            <person name="Rouse G."/>
            <person name="Saenphimmachak C."/>
            <person name="Sehra H.K."/>
            <person name="Sheridan E."/>
            <person name="Shownkeen R."/>
            <person name="Sims S."/>
            <person name="Skuce C.D."/>
            <person name="Smith M."/>
            <person name="Steward C."/>
            <person name="Subramanian S."/>
            <person name="Sycamore N."/>
            <person name="Tracey A."/>
            <person name="Tromans A."/>
            <person name="Van Helmond Z."/>
            <person name="Wall M."/>
            <person name="Wallis J.M."/>
            <person name="White S."/>
            <person name="Whitehead S.L."/>
            <person name="Wilkinson J.E."/>
            <person name="Willey D.L."/>
            <person name="Williams H."/>
            <person name="Wilming L."/>
            <person name="Wray P.W."/>
            <person name="Wu Z."/>
            <person name="Coulson A."/>
            <person name="Vaudin M."/>
            <person name="Sulston J.E."/>
            <person name="Durbin R.M."/>
            <person name="Hubbard T."/>
            <person name="Wooster R."/>
            <person name="Dunham I."/>
            <person name="Carter N.P."/>
            <person name="McVean G."/>
            <person name="Ross M.T."/>
            <person name="Harrow J."/>
            <person name="Olson M.V."/>
            <person name="Beck S."/>
            <person name="Rogers J."/>
            <person name="Bentley D.R."/>
        </authorList>
    </citation>
    <scope>NUCLEOTIDE SEQUENCE [LARGE SCALE GENOMIC DNA]</scope>
</reference>
<reference key="3">
    <citation type="journal article" date="2004" name="Proc. Natl. Acad. Sci. U.S.A.">
        <title>The human olfactory receptor gene family.</title>
        <authorList>
            <person name="Malnic B."/>
            <person name="Godfrey P.A."/>
            <person name="Buck L.B."/>
        </authorList>
    </citation>
    <scope>IDENTIFICATION</scope>
</reference>
<reference key="4">
    <citation type="journal article" date="2004" name="Proc. Natl. Acad. Sci. U.S.A.">
        <authorList>
            <person name="Malnic B."/>
            <person name="Godfrey P.A."/>
            <person name="Buck L.B."/>
        </authorList>
    </citation>
    <scope>ERRATUM OF PUBMED:14983052</scope>
</reference>
<reference key="5">
    <citation type="journal article" date="2003" name="Nat. Genet.">
        <title>Different noses for different people.</title>
        <authorList>
            <person name="Menashe I."/>
            <person name="Man O."/>
            <person name="Lancet D."/>
            <person name="Gilad Y."/>
        </authorList>
    </citation>
    <scope>POLYMORPHISM</scope>
</reference>
<accession>Q8NGY0</accession>
<accession>Q6IFR8</accession>
<proteinExistence type="inferred from homology"/>
<comment type="function">
    <text evidence="3">Odorant receptor.</text>
</comment>
<comment type="subcellular location">
    <subcellularLocation>
        <location>Cell membrane</location>
        <topology>Multi-pass membrane protein</topology>
    </subcellularLocation>
</comment>
<comment type="polymorphism">
    <text>A stop codon at position Trp-66 in the gene coding for this protein is responsible for functional diversity thus producing a pseudogene. The stop codon is more frequent in African-Americans than in non-Africans.</text>
</comment>
<comment type="similarity">
    <text evidence="2">Belongs to the G-protein coupled receptor 1 family.</text>
</comment>
<comment type="sequence caution" evidence="3">
    <conflict type="erroneous initiation">
        <sequence resource="EMBL-CDS" id="BAC05862"/>
    </conflict>
</comment>
<comment type="online information" name="Human Olfactory Receptor Data Exploratorium (HORDE)">
    <link uri="http://genome.weizmann.ac.il/horde/card/index/symbol:OR10X1"/>
</comment>
<protein>
    <recommendedName>
        <fullName>Olfactory receptor 10X1</fullName>
    </recommendedName>
    <alternativeName>
        <fullName>Olfactory receptor OR1-14</fullName>
    </alternativeName>
</protein>